<organism>
    <name type="scientific">Listeria monocytogenes serotype 4b (strain CLIP80459)</name>
    <dbReference type="NCBI Taxonomy" id="568819"/>
    <lineage>
        <taxon>Bacteria</taxon>
        <taxon>Bacillati</taxon>
        <taxon>Bacillota</taxon>
        <taxon>Bacilli</taxon>
        <taxon>Bacillales</taxon>
        <taxon>Listeriaceae</taxon>
        <taxon>Listeria</taxon>
    </lineage>
</organism>
<proteinExistence type="inferred from homology"/>
<gene>
    <name type="ordered locus">Lm4b_01466</name>
</gene>
<feature type="chain" id="PRO_1000206456" description="UPF0178 protein Lm4b_01466">
    <location>
        <begin position="1"/>
        <end position="146"/>
    </location>
</feature>
<accession>C1KVA3</accession>
<protein>
    <recommendedName>
        <fullName evidence="1">UPF0178 protein Lm4b_01466</fullName>
    </recommendedName>
</protein>
<comment type="similarity">
    <text evidence="1">Belongs to the UPF0178 family.</text>
</comment>
<sequence length="146" mass="16681">MPKILVDADACPVKAEIKQVAEHFQLDVIFVASFNHYSVNTNGENWIFVDTGKESADMRMMNLAKKGDIIVTQDIGLASILLAKGTFVFSNRGELYREEEMSLMLDIRYRHAKDRQQGKYSKGPKAMSDQDRSLFKDRLTTFLQNK</sequence>
<reference key="1">
    <citation type="journal article" date="2012" name="BMC Genomics">
        <title>Comparative genomics and transcriptomics of lineages I, II, and III strains of Listeria monocytogenes.</title>
        <authorList>
            <person name="Hain T."/>
            <person name="Ghai R."/>
            <person name="Billion A."/>
            <person name="Kuenne C.T."/>
            <person name="Steinweg C."/>
            <person name="Izar B."/>
            <person name="Mohamed W."/>
            <person name="Mraheil M."/>
            <person name="Domann E."/>
            <person name="Schaffrath S."/>
            <person name="Karst U."/>
            <person name="Goesmann A."/>
            <person name="Oehm S."/>
            <person name="Puhler A."/>
            <person name="Merkl R."/>
            <person name="Vorwerk S."/>
            <person name="Glaser P."/>
            <person name="Garrido P."/>
            <person name="Rusniok C."/>
            <person name="Buchrieser C."/>
            <person name="Goebel W."/>
            <person name="Chakraborty T."/>
        </authorList>
    </citation>
    <scope>NUCLEOTIDE SEQUENCE [LARGE SCALE GENOMIC DNA]</scope>
    <source>
        <strain>CLIP80459</strain>
    </source>
</reference>
<dbReference type="EMBL" id="FM242711">
    <property type="protein sequence ID" value="CAS05228.1"/>
    <property type="molecule type" value="Genomic_DNA"/>
</dbReference>
<dbReference type="RefSeq" id="WP_003740997.1">
    <property type="nucleotide sequence ID" value="NC_012488.1"/>
</dbReference>
<dbReference type="KEGG" id="lmc:Lm4b_01466"/>
<dbReference type="HOGENOM" id="CLU_106619_0_0_9"/>
<dbReference type="CDD" id="cd18720">
    <property type="entry name" value="PIN_YqxD-like"/>
    <property type="match status" value="1"/>
</dbReference>
<dbReference type="HAMAP" id="MF_00489">
    <property type="entry name" value="UPF0178"/>
    <property type="match status" value="1"/>
</dbReference>
<dbReference type="InterPro" id="IPR003791">
    <property type="entry name" value="UPF0178"/>
</dbReference>
<dbReference type="NCBIfam" id="NF001095">
    <property type="entry name" value="PRK00124.1"/>
    <property type="match status" value="1"/>
</dbReference>
<dbReference type="PANTHER" id="PTHR35146">
    <property type="entry name" value="UPF0178 PROTEIN YAII"/>
    <property type="match status" value="1"/>
</dbReference>
<dbReference type="PANTHER" id="PTHR35146:SF1">
    <property type="entry name" value="UPF0178 PROTEIN YAII"/>
    <property type="match status" value="1"/>
</dbReference>
<dbReference type="Pfam" id="PF02639">
    <property type="entry name" value="DUF188"/>
    <property type="match status" value="1"/>
</dbReference>
<evidence type="ECO:0000255" key="1">
    <source>
        <dbReference type="HAMAP-Rule" id="MF_00489"/>
    </source>
</evidence>
<name>Y1466_LISMC</name>